<keyword id="KW-0175">Coiled coil</keyword>
<keyword id="KW-0472">Membrane</keyword>
<keyword id="KW-0496">Mitochondrion</keyword>
<keyword id="KW-0999">Mitochondrion inner membrane</keyword>
<keyword id="KW-0809">Transit peptide</keyword>
<keyword id="KW-0812">Transmembrane</keyword>
<keyword id="KW-1133">Transmembrane helix</keyword>
<accession>C5GFG7</accession>
<name>MIC60_AJEDR</name>
<comment type="function">
    <text evidence="1">Component of the MICOS complex, a large protein complex of the mitochondrial inner membrane that plays crucial roles in the maintenance of crista junctions, inner membrane architecture, and formation of contact sites to the outer membrane. Plays a role in keeping cristae membranes connected to the inner boundary membrane. Also promotes protein import via the mitochondrial intermembrane space assembly (MIA) pathway (By similarity).</text>
</comment>
<comment type="subunit">
    <text evidence="1">Component of the mitochondrial contact site and cristae organizing system (MICOS) complex.</text>
</comment>
<comment type="subcellular location">
    <subcellularLocation>
        <location evidence="1">Mitochondrion inner membrane</location>
        <topology evidence="1">Single-pass membrane protein</topology>
    </subcellularLocation>
</comment>
<comment type="similarity">
    <text evidence="4">Belongs to the MICOS complex subunit Mic60 family.</text>
</comment>
<gene>
    <name type="primary">MIC60</name>
    <name type="ORF">BDCG_03160</name>
</gene>
<sequence>MLRTSIASSRQVLSSPICPNPSVQWLHTSRARRVNAAASRRYYAVARKPNAGVRSSSTPNAAATPELSQKATNSTSTKPPGPNDPDVRSPASPSTGSTLHPETVSKPPQSPAVQGQTSPGSSVQPPEHEPSPPPPRPPPAPKTGLLRKLLYLFLTTGLAYAGGVWYSLRSDNFYDFFTEYIPYGEEAVLYLEERDFRSRFPSIARQINRRVSAPRDEGAQVMIPGRSGLSWKVAEEQQEASDVTKQGQHISATDANELTEETKVAEKAKEDVKSKPVAKKAEAAEPKSSPKVVEPHPAKAEENTSLEAPRQPVVPAAAAIEHLGLDNEDEPVVQDLVKVFNDIITVISADESASKFSVPIAKAKEELEKIGDRIVALKNDAQESAKEEIRNAQAALDKSAAELVRHINEVRAQDAAEFREEFESEREKISKSYQEKVTTELQRAHEVAEQRLRNELVEQAIELNRKFLADVKTLVENEREGRLSKLAELTANVAELERLTAGWSDVIDINLRTQQLQVAVDSVRTTLENSEVPRPFIRELAAVKELASNDEVVAAAIASISPTAYQRGIPSPAQLVDRFRRVASEVRKASLLPENAGITSHAASLVLSKVMLKKQGTPVGNDVESILTRTENLLEEGNFDEAAREMNSLQGWAKLLSKDWLADVRRVLEVKQALEVIETEARLRCLQVE</sequence>
<proteinExistence type="inferred from homology"/>
<evidence type="ECO:0000250" key="1"/>
<evidence type="ECO:0000255" key="2"/>
<evidence type="ECO:0000256" key="3">
    <source>
        <dbReference type="SAM" id="MobiDB-lite"/>
    </source>
</evidence>
<evidence type="ECO:0000305" key="4"/>
<feature type="transit peptide" description="Mitochondrion" evidence="2">
    <location>
        <begin position="1"/>
        <end position="55"/>
    </location>
</feature>
<feature type="chain" id="PRO_0000406640" description="MICOS complex subunit MIC60">
    <location>
        <begin position="56"/>
        <end position="689"/>
    </location>
</feature>
<feature type="topological domain" description="Mitochondrial matrix" evidence="2">
    <location>
        <begin position="56"/>
        <end position="148"/>
    </location>
</feature>
<feature type="transmembrane region" description="Helical" evidence="2">
    <location>
        <begin position="149"/>
        <end position="168"/>
    </location>
</feature>
<feature type="topological domain" description="Mitochondrial intermembrane" evidence="2">
    <location>
        <begin position="169"/>
        <end position="689"/>
    </location>
</feature>
<feature type="region of interest" description="Disordered" evidence="3">
    <location>
        <begin position="49"/>
        <end position="142"/>
    </location>
</feature>
<feature type="region of interest" description="Disordered" evidence="3">
    <location>
        <begin position="234"/>
        <end position="308"/>
    </location>
</feature>
<feature type="coiled-coil region" evidence="2">
    <location>
        <begin position="360"/>
        <end position="505"/>
    </location>
</feature>
<feature type="compositionally biased region" description="Polar residues" evidence="3">
    <location>
        <begin position="53"/>
        <end position="78"/>
    </location>
</feature>
<feature type="compositionally biased region" description="Polar residues" evidence="3">
    <location>
        <begin position="91"/>
        <end position="100"/>
    </location>
</feature>
<feature type="compositionally biased region" description="Polar residues" evidence="3">
    <location>
        <begin position="111"/>
        <end position="124"/>
    </location>
</feature>
<feature type="compositionally biased region" description="Pro residues" evidence="3">
    <location>
        <begin position="131"/>
        <end position="141"/>
    </location>
</feature>
<feature type="compositionally biased region" description="Polar residues" evidence="3">
    <location>
        <begin position="240"/>
        <end position="256"/>
    </location>
</feature>
<feature type="compositionally biased region" description="Basic and acidic residues" evidence="3">
    <location>
        <begin position="260"/>
        <end position="285"/>
    </location>
</feature>
<feature type="compositionally biased region" description="Basic and acidic residues" evidence="3">
    <location>
        <begin position="293"/>
        <end position="302"/>
    </location>
</feature>
<reference key="1">
    <citation type="journal article" date="2015" name="PLoS Genet.">
        <title>The dynamic genome and transcriptome of the human fungal pathogen Blastomyces and close relative Emmonsia.</title>
        <authorList>
            <person name="Munoz J.F."/>
            <person name="Gauthier G.M."/>
            <person name="Desjardins C.A."/>
            <person name="Gallo J.E."/>
            <person name="Holder J."/>
            <person name="Sullivan T.D."/>
            <person name="Marty A.J."/>
            <person name="Carmen J.C."/>
            <person name="Chen Z."/>
            <person name="Ding L."/>
            <person name="Gujja S."/>
            <person name="Magrini V."/>
            <person name="Misas E."/>
            <person name="Mitreva M."/>
            <person name="Priest M."/>
            <person name="Saif S."/>
            <person name="Whiston E.A."/>
            <person name="Young S."/>
            <person name="Zeng Q."/>
            <person name="Goldman W.E."/>
            <person name="Mardis E.R."/>
            <person name="Taylor J.W."/>
            <person name="McEwen J.G."/>
            <person name="Clay O.K."/>
            <person name="Klein B.S."/>
            <person name="Cuomo C.A."/>
        </authorList>
    </citation>
    <scope>NUCLEOTIDE SEQUENCE [LARGE SCALE GENOMIC DNA]</scope>
    <source>
        <strain>ER-3 / ATCC MYA-2586</strain>
    </source>
</reference>
<protein>
    <recommendedName>
        <fullName>MICOS complex subunit MIC60</fullName>
    </recommendedName>
    <alternativeName>
        <fullName>Mitofilin</fullName>
    </alternativeName>
</protein>
<organism>
    <name type="scientific">Ajellomyces dermatitidis (strain ER-3 / ATCC MYA-2586)</name>
    <name type="common">Blastomyces dermatitidis</name>
    <dbReference type="NCBI Taxonomy" id="559297"/>
    <lineage>
        <taxon>Eukaryota</taxon>
        <taxon>Fungi</taxon>
        <taxon>Dikarya</taxon>
        <taxon>Ascomycota</taxon>
        <taxon>Pezizomycotina</taxon>
        <taxon>Eurotiomycetes</taxon>
        <taxon>Eurotiomycetidae</taxon>
        <taxon>Onygenales</taxon>
        <taxon>Ajellomycetaceae</taxon>
        <taxon>Blastomyces</taxon>
    </lineage>
</organism>
<dbReference type="EMBL" id="EQ999975">
    <property type="protein sequence ID" value="EEQ88040.2"/>
    <property type="molecule type" value="Genomic_DNA"/>
</dbReference>
<dbReference type="SMR" id="C5GFG7"/>
<dbReference type="STRING" id="559297.C5GFG7"/>
<dbReference type="eggNOG" id="KOG1854">
    <property type="taxonomic scope" value="Eukaryota"/>
</dbReference>
<dbReference type="HOGENOM" id="CLU_008024_1_2_1"/>
<dbReference type="OMA" id="RLDHQMQ"/>
<dbReference type="GO" id="GO:0061617">
    <property type="term" value="C:MICOS complex"/>
    <property type="evidence" value="ECO:0007669"/>
    <property type="project" value="TreeGrafter"/>
</dbReference>
<dbReference type="GO" id="GO:0042407">
    <property type="term" value="P:cristae formation"/>
    <property type="evidence" value="ECO:0007669"/>
    <property type="project" value="TreeGrafter"/>
</dbReference>
<dbReference type="InterPro" id="IPR019133">
    <property type="entry name" value="MIC60"/>
</dbReference>
<dbReference type="PANTHER" id="PTHR15415:SF7">
    <property type="entry name" value="MICOS COMPLEX SUBUNIT MIC60"/>
    <property type="match status" value="1"/>
</dbReference>
<dbReference type="PANTHER" id="PTHR15415">
    <property type="entry name" value="MITOFILIN"/>
    <property type="match status" value="1"/>
</dbReference>
<dbReference type="Pfam" id="PF09731">
    <property type="entry name" value="Mitofilin"/>
    <property type="match status" value="2"/>
</dbReference>